<accession>P39300</accession>
<accession>Q2M6B3</accession>
<gene>
    <name type="primary">ulaG</name>
    <name type="synonym">yjfR</name>
    <name type="ordered locus">b4192</name>
    <name type="ordered locus">JW5868</name>
</gene>
<comment type="function">
    <text evidence="2 4">Probably catalyzes the hydrolysis of L-ascorbate-6-P into 3-keto-L-gulonate-6-P. Is essential for L-ascorbate utilization under anaerobic conditions. Also shows phosphodiesterase activity, hydrolyzing phosphodiester bond in the artificial chromogenic substrate bis-p-nitrophenyl phosphate (bis-pNPP).</text>
</comment>
<comment type="catalytic activity">
    <reaction>
        <text>L-ascorbate 6-phosphate + H2O = 3-dehydro-L-gulonate 6-phosphate</text>
        <dbReference type="Rhea" id="RHEA:28803"/>
        <dbReference type="ChEBI" id="CHEBI:15377"/>
        <dbReference type="ChEBI" id="CHEBI:58774"/>
        <dbReference type="ChEBI" id="CHEBI:61698"/>
    </reaction>
</comment>
<comment type="cofactor">
    <cofactor evidence="5">
        <name>a divalent metal cation</name>
        <dbReference type="ChEBI" id="CHEBI:60240"/>
    </cofactor>
</comment>
<comment type="pathway">
    <text>Cofactor degradation; L-ascorbate degradation; D-xylulose 5-phosphate from L-ascorbate: step 1/4.</text>
</comment>
<comment type="subcellular location">
    <subcellularLocation>
        <location evidence="5">Cytoplasm</location>
    </subcellularLocation>
</comment>
<comment type="induction">
    <text evidence="1 3">Induced by L-ascorbate. Repressed by UlaR.</text>
</comment>
<comment type="similarity">
    <text evidence="5">Belongs to the UlaG family.</text>
</comment>
<comment type="sequence caution" evidence="5">
    <conflict type="erroneous initiation">
        <sequence resource="EMBL-CDS" id="AAA97088"/>
    </conflict>
    <text>Extended N-terminus.</text>
</comment>
<keyword id="KW-0002">3D-structure</keyword>
<keyword id="KW-0963">Cytoplasm</keyword>
<keyword id="KW-0378">Hydrolase</keyword>
<keyword id="KW-1185">Reference proteome</keyword>
<reference key="1">
    <citation type="journal article" date="1995" name="Nucleic Acids Res.">
        <title>Analysis of the Escherichia coli genome VI: DNA sequence of the region from 92.8 through 100 minutes.</title>
        <authorList>
            <person name="Burland V.D."/>
            <person name="Plunkett G. III"/>
            <person name="Sofia H.J."/>
            <person name="Daniels D.L."/>
            <person name="Blattner F.R."/>
        </authorList>
    </citation>
    <scope>NUCLEOTIDE SEQUENCE [LARGE SCALE GENOMIC DNA]</scope>
    <source>
        <strain>K12 / MG1655 / ATCC 47076</strain>
    </source>
</reference>
<reference key="2">
    <citation type="journal article" date="1997" name="Science">
        <title>The complete genome sequence of Escherichia coli K-12.</title>
        <authorList>
            <person name="Blattner F.R."/>
            <person name="Plunkett G. III"/>
            <person name="Bloch C.A."/>
            <person name="Perna N.T."/>
            <person name="Burland V."/>
            <person name="Riley M."/>
            <person name="Collado-Vides J."/>
            <person name="Glasner J.D."/>
            <person name="Rode C.K."/>
            <person name="Mayhew G.F."/>
            <person name="Gregor J."/>
            <person name="Davis N.W."/>
            <person name="Kirkpatrick H.A."/>
            <person name="Goeden M.A."/>
            <person name="Rose D.J."/>
            <person name="Mau B."/>
            <person name="Shao Y."/>
        </authorList>
    </citation>
    <scope>NUCLEOTIDE SEQUENCE [LARGE SCALE GENOMIC DNA]</scope>
    <source>
        <strain>K12 / MG1655 / ATCC 47076</strain>
    </source>
</reference>
<reference key="3">
    <citation type="journal article" date="2006" name="Mol. Syst. Biol.">
        <title>Highly accurate genome sequences of Escherichia coli K-12 strains MG1655 and W3110.</title>
        <authorList>
            <person name="Hayashi K."/>
            <person name="Morooka N."/>
            <person name="Yamamoto Y."/>
            <person name="Fujita K."/>
            <person name="Isono K."/>
            <person name="Choi S."/>
            <person name="Ohtsubo E."/>
            <person name="Baba T."/>
            <person name="Wanner B.L."/>
            <person name="Mori H."/>
            <person name="Horiuchi T."/>
        </authorList>
    </citation>
    <scope>NUCLEOTIDE SEQUENCE [LARGE SCALE GENOMIC DNA]</scope>
    <source>
        <strain>K12 / W3110 / ATCC 27325 / DSM 5911</strain>
    </source>
</reference>
<reference key="4">
    <citation type="journal article" date="2002" name="J. Bacteriol.">
        <title>The gene yjfQ encodes the repressor of the yjfR-X regulon (ula), which is involved in L-ascorbate metabolism in Escherichia coli.</title>
        <authorList>
            <person name="Campos E."/>
            <person name="Aguilar J."/>
            <person name="Baldoma L."/>
            <person name="Badia J."/>
        </authorList>
    </citation>
    <scope>TRANSCRIPTIONAL REGULATION</scope>
</reference>
<reference key="5">
    <citation type="journal article" date="2003" name="J. Bacteriol.">
        <title>The ascorbate transporter of Escherichia coli.</title>
        <authorList>
            <person name="Zhang Z."/>
            <person name="Aboulwafa M."/>
            <person name="Smith M.H."/>
            <person name="Saier M.H. Jr."/>
        </authorList>
    </citation>
    <scope>PROBABLE FUNCTION</scope>
    <scope>ROLE IN L-ASCORBATE UTILIZATION</scope>
    <source>
        <strain>K12 / BW25113</strain>
    </source>
</reference>
<reference key="6">
    <citation type="journal article" date="2004" name="J. Bacteriol.">
        <title>Regulation of expression of the divergent ulaG and ulaABCDEF operons involved in L-ascorbate dissimilation in Escherichia coli.</title>
        <authorList>
            <person name="Campos E."/>
            <person name="Baldoma L."/>
            <person name="Aguilar J."/>
            <person name="Badia J."/>
        </authorList>
    </citation>
    <scope>TRANSCRIPTIONAL REGULATION</scope>
</reference>
<reference key="7">
    <citation type="journal article" date="2005" name="FEMS Microbiol. Rev.">
        <title>Enzyme genomics: application of general enzymatic screens to discover new enzymes.</title>
        <authorList>
            <person name="Kuznetsova E."/>
            <person name="Proudfoot M."/>
            <person name="Sanders S.A."/>
            <person name="Reinking J."/>
            <person name="Savchenko A."/>
            <person name="Arrowsmith C.H."/>
            <person name="Edwards A.M."/>
            <person name="Yakunin A.F."/>
        </authorList>
    </citation>
    <scope>FUNCTION</scope>
</reference>
<sequence>MSKVKSITRESWILSTFPEWGSWLNEEIEQEQVAPGTFAMWWLGCTGIWLKSEGGTNVCVDFWCGTGKQSHGNPLMKQGHQMQRMAGVKKLQPNLRTTPFVLDPFAIRQIDAVLATHDHNDHIDVNVAAAVMQNCADDVPFIGPKTCVDLWIGWGVPKERCIVVKPGDVVKVKDIEIHALDAFDRTALITLPADQKAAGVLPDGMDDRAVNYLFKTPGGSLYHSGDSHYSNYYAKHGNEHQIDVALGSYGENPRGITDKMTSADMLRMGEALNAKVVIPFHHDIWSNFQADPQEIRVLWEMKKDRLKYGFKPFIWQVGGKFTWPLDKDNFEYHYPRGFDDCFTIEPDLPFKSFL</sequence>
<feature type="chain" id="PRO_0000169757" description="Probable L-ascorbate-6-phosphate lactonase UlaG">
    <location>
        <begin position="1"/>
        <end position="354"/>
    </location>
</feature>
<feature type="helix" evidence="6">
    <location>
        <begin position="3"/>
        <end position="6"/>
    </location>
</feature>
<feature type="helix" evidence="6">
    <location>
        <begin position="9"/>
        <end position="14"/>
    </location>
</feature>
<feature type="turn" evidence="6">
    <location>
        <begin position="19"/>
        <end position="22"/>
    </location>
</feature>
<feature type="helix" evidence="6">
    <location>
        <begin position="23"/>
        <end position="30"/>
    </location>
</feature>
<feature type="strand" evidence="6">
    <location>
        <begin position="38"/>
        <end position="44"/>
    </location>
</feature>
<feature type="strand" evidence="6">
    <location>
        <begin position="47"/>
        <end position="51"/>
    </location>
</feature>
<feature type="strand" evidence="6">
    <location>
        <begin position="57"/>
        <end position="61"/>
    </location>
</feature>
<feature type="helix" evidence="6">
    <location>
        <begin position="104"/>
        <end position="106"/>
    </location>
</feature>
<feature type="strand" evidence="6">
    <location>
        <begin position="111"/>
        <end position="114"/>
    </location>
</feature>
<feature type="strand" evidence="6">
    <location>
        <begin position="116"/>
        <end position="118"/>
    </location>
</feature>
<feature type="helix" evidence="6">
    <location>
        <begin position="120"/>
        <end position="122"/>
    </location>
</feature>
<feature type="helix" evidence="6">
    <location>
        <begin position="125"/>
        <end position="134"/>
    </location>
</feature>
<feature type="strand" evidence="6">
    <location>
        <begin position="141"/>
        <end position="143"/>
    </location>
</feature>
<feature type="helix" evidence="6">
    <location>
        <begin position="145"/>
        <end position="154"/>
    </location>
</feature>
<feature type="helix" evidence="6">
    <location>
        <begin position="158"/>
        <end position="160"/>
    </location>
</feature>
<feature type="strand" evidence="6">
    <location>
        <begin position="161"/>
        <end position="163"/>
    </location>
</feature>
<feature type="strand" evidence="6">
    <location>
        <begin position="169"/>
        <end position="172"/>
    </location>
</feature>
<feature type="strand" evidence="6">
    <location>
        <begin position="175"/>
        <end position="181"/>
    </location>
</feature>
<feature type="turn" evidence="6">
    <location>
        <begin position="206"/>
        <end position="208"/>
    </location>
</feature>
<feature type="strand" evidence="6">
    <location>
        <begin position="209"/>
        <end position="216"/>
    </location>
</feature>
<feature type="strand" evidence="6">
    <location>
        <begin position="219"/>
        <end position="223"/>
    </location>
</feature>
<feature type="helix" evidence="6">
    <location>
        <begin position="233"/>
        <end position="239"/>
    </location>
</feature>
<feature type="strand" evidence="6">
    <location>
        <begin position="244"/>
        <end position="249"/>
    </location>
</feature>
<feature type="helix" evidence="6">
    <location>
        <begin position="262"/>
        <end position="272"/>
    </location>
</feature>
<feature type="strand" evidence="6">
    <location>
        <begin position="275"/>
        <end position="281"/>
    </location>
</feature>
<feature type="turn" evidence="6">
    <location>
        <begin position="282"/>
        <end position="284"/>
    </location>
</feature>
<feature type="helix" evidence="6">
    <location>
        <begin position="286"/>
        <end position="288"/>
    </location>
</feature>
<feature type="helix" evidence="6">
    <location>
        <begin position="293"/>
        <end position="302"/>
    </location>
</feature>
<feature type="turn" evidence="6">
    <location>
        <begin position="303"/>
        <end position="307"/>
    </location>
</feature>
<feature type="strand" evidence="6">
    <location>
        <begin position="320"/>
        <end position="323"/>
    </location>
</feature>
<feature type="turn" evidence="6">
    <location>
        <begin position="324"/>
        <end position="328"/>
    </location>
</feature>
<protein>
    <recommendedName>
        <fullName>Probable L-ascorbate-6-phosphate lactonase UlaG</fullName>
        <ecNumber>3.1.1.-</ecNumber>
    </recommendedName>
    <alternativeName>
        <fullName>L-ascorbate utilization protein G</fullName>
    </alternativeName>
</protein>
<proteinExistence type="evidence at protein level"/>
<organism>
    <name type="scientific">Escherichia coli (strain K12)</name>
    <dbReference type="NCBI Taxonomy" id="83333"/>
    <lineage>
        <taxon>Bacteria</taxon>
        <taxon>Pseudomonadati</taxon>
        <taxon>Pseudomonadota</taxon>
        <taxon>Gammaproteobacteria</taxon>
        <taxon>Enterobacterales</taxon>
        <taxon>Enterobacteriaceae</taxon>
        <taxon>Escherichia</taxon>
    </lineage>
</organism>
<name>ULAG_ECOLI</name>
<evidence type="ECO:0000269" key="1">
    <source>
    </source>
</evidence>
<evidence type="ECO:0000269" key="2">
    <source>
    </source>
</evidence>
<evidence type="ECO:0000269" key="3">
    <source>
    </source>
</evidence>
<evidence type="ECO:0000269" key="4">
    <source>
    </source>
</evidence>
<evidence type="ECO:0000305" key="5"/>
<evidence type="ECO:0007829" key="6">
    <source>
        <dbReference type="PDB" id="2WYL"/>
    </source>
</evidence>
<dbReference type="EC" id="3.1.1.-"/>
<dbReference type="EMBL" id="U14003">
    <property type="protein sequence ID" value="AAA97088.1"/>
    <property type="status" value="ALT_INIT"/>
    <property type="molecule type" value="Genomic_DNA"/>
</dbReference>
<dbReference type="EMBL" id="U00096">
    <property type="protein sequence ID" value="AAC77149.2"/>
    <property type="molecule type" value="Genomic_DNA"/>
</dbReference>
<dbReference type="EMBL" id="AP009048">
    <property type="protein sequence ID" value="BAE78193.1"/>
    <property type="molecule type" value="Genomic_DNA"/>
</dbReference>
<dbReference type="RefSeq" id="NP_418613.2">
    <property type="nucleotide sequence ID" value="NC_000913.3"/>
</dbReference>
<dbReference type="RefSeq" id="WP_001295191.1">
    <property type="nucleotide sequence ID" value="NZ_SSUV01000014.1"/>
</dbReference>
<dbReference type="PDB" id="2WYL">
    <property type="method" value="X-ray"/>
    <property type="resolution" value="2.59 A"/>
    <property type="chains" value="A/B/C/D/E/F=1-354"/>
</dbReference>
<dbReference type="PDB" id="2WYM">
    <property type="method" value="X-ray"/>
    <property type="resolution" value="2.60 A"/>
    <property type="chains" value="A/B/C/D/E/F=1-354"/>
</dbReference>
<dbReference type="PDBsum" id="2WYL"/>
<dbReference type="PDBsum" id="2WYM"/>
<dbReference type="SMR" id="P39300"/>
<dbReference type="BioGRID" id="4262712">
    <property type="interactions" value="11"/>
</dbReference>
<dbReference type="DIP" id="DIP-12596N"/>
<dbReference type="FunCoup" id="P39300">
    <property type="interactions" value="106"/>
</dbReference>
<dbReference type="STRING" id="511145.b4192"/>
<dbReference type="DrugBank" id="DB04464">
    <property type="generic name" value="N-Formylmethionine"/>
</dbReference>
<dbReference type="PaxDb" id="511145-b4192"/>
<dbReference type="EnsemblBacteria" id="AAC77149">
    <property type="protein sequence ID" value="AAC77149"/>
    <property type="gene ID" value="b4192"/>
</dbReference>
<dbReference type="GeneID" id="93777632"/>
<dbReference type="GeneID" id="948705"/>
<dbReference type="KEGG" id="ecj:JW5868"/>
<dbReference type="KEGG" id="eco:b4192"/>
<dbReference type="KEGG" id="ecoc:C3026_22645"/>
<dbReference type="PATRIC" id="fig|1411691.4.peg.2509"/>
<dbReference type="EchoBASE" id="EB2385"/>
<dbReference type="eggNOG" id="COG2220">
    <property type="taxonomic scope" value="Bacteria"/>
</dbReference>
<dbReference type="HOGENOM" id="CLU_074775_0_0_6"/>
<dbReference type="InParanoid" id="P39300"/>
<dbReference type="OMA" id="HWDMWKG"/>
<dbReference type="OrthoDB" id="9800061at2"/>
<dbReference type="PhylomeDB" id="P39300"/>
<dbReference type="BioCyc" id="EcoCyc:G7855-MONOMER"/>
<dbReference type="BioCyc" id="MetaCyc:G7855-MONOMER"/>
<dbReference type="BRENDA" id="3.1.4.1">
    <property type="organism ID" value="2026"/>
</dbReference>
<dbReference type="UniPathway" id="UPA00263">
    <property type="reaction ID" value="UER00377"/>
</dbReference>
<dbReference type="EvolutionaryTrace" id="P39300"/>
<dbReference type="PRO" id="PR:P39300"/>
<dbReference type="Proteomes" id="UP000000625">
    <property type="component" value="Chromosome"/>
</dbReference>
<dbReference type="GO" id="GO:0005737">
    <property type="term" value="C:cytoplasm"/>
    <property type="evidence" value="ECO:0007669"/>
    <property type="project" value="UniProtKB-SubCell"/>
</dbReference>
<dbReference type="GO" id="GO:0016787">
    <property type="term" value="F:hydrolase activity"/>
    <property type="evidence" value="ECO:0000318"/>
    <property type="project" value="GO_Central"/>
</dbReference>
<dbReference type="GO" id="GO:0035460">
    <property type="term" value="F:L-ascorbate 6-phosphate lactonase activity"/>
    <property type="evidence" value="ECO:0000314"/>
    <property type="project" value="EcoCyc"/>
</dbReference>
<dbReference type="GO" id="GO:0030145">
    <property type="term" value="F:manganese ion binding"/>
    <property type="evidence" value="ECO:0000314"/>
    <property type="project" value="EcoCyc"/>
</dbReference>
<dbReference type="GO" id="GO:0019854">
    <property type="term" value="P:L-ascorbic acid catabolic process"/>
    <property type="evidence" value="ECO:0000315"/>
    <property type="project" value="EcoCyc"/>
</dbReference>
<dbReference type="CDD" id="cd16284">
    <property type="entry name" value="UlaG-like_MBL-fold"/>
    <property type="match status" value="1"/>
</dbReference>
<dbReference type="FunFam" id="3.60.15.10:FF:000004">
    <property type="entry name" value="Probable L-ascorbate-6-phosphate lactonase UlaG"/>
    <property type="match status" value="1"/>
</dbReference>
<dbReference type="Gene3D" id="3.60.15.10">
    <property type="entry name" value="Ribonuclease Z/Hydroxyacylglutathione hydrolase-like"/>
    <property type="match status" value="1"/>
</dbReference>
<dbReference type="HAMAP" id="MF_01266">
    <property type="entry name" value="UlaG"/>
    <property type="match status" value="1"/>
</dbReference>
<dbReference type="InterPro" id="IPR023951">
    <property type="entry name" value="L-ascorbate_6P_UlaG"/>
</dbReference>
<dbReference type="InterPro" id="IPR001279">
    <property type="entry name" value="Metallo-B-lactamas"/>
</dbReference>
<dbReference type="InterPro" id="IPR036866">
    <property type="entry name" value="RibonucZ/Hydroxyglut_hydro"/>
</dbReference>
<dbReference type="InterPro" id="IPR048021">
    <property type="entry name" value="UlaG-like_MBL-fold"/>
</dbReference>
<dbReference type="InterPro" id="IPR050114">
    <property type="entry name" value="UPF0173_UPF0282_UlaG_hydrolase"/>
</dbReference>
<dbReference type="NCBIfam" id="NF008688">
    <property type="entry name" value="PRK11709.1"/>
    <property type="match status" value="1"/>
</dbReference>
<dbReference type="PANTHER" id="PTHR43546:SF9">
    <property type="entry name" value="L-ASCORBATE-6-PHOSPHATE LACTONASE ULAG-RELATED"/>
    <property type="match status" value="1"/>
</dbReference>
<dbReference type="PANTHER" id="PTHR43546">
    <property type="entry name" value="UPF0173 METAL-DEPENDENT HYDROLASE MJ1163-RELATED"/>
    <property type="match status" value="1"/>
</dbReference>
<dbReference type="Pfam" id="PF12706">
    <property type="entry name" value="Lactamase_B_2"/>
    <property type="match status" value="1"/>
</dbReference>
<dbReference type="SUPFAM" id="SSF56281">
    <property type="entry name" value="Metallo-hydrolase/oxidoreductase"/>
    <property type="match status" value="1"/>
</dbReference>